<sequence>MDLHNIREDYSKRELSEADCADNPIEQFERWLDEAVRAQVNEPTAVNVAAVDGRGRPNSRMVLLKEVNSEGFVFFTNYHSRKGRSLDAHPFAAMTFFWPELERQVRVEGRVERLAEKLSDEYFESRPYQSRLGAWASAQSEVIPNKAVLVAKAAAVGLKHPLHVPRPPHWGGYIVIPDLLEFWQGRPSRLHDRIQYRLLDGGWIRERLSP</sequence>
<accession>Q9JYZ5</accession>
<gene>
    <name evidence="1" type="primary">pdxH</name>
    <name type="ordered locus">NMB1360</name>
</gene>
<feature type="chain" id="PRO_0000167727" description="Pyridoxine/pyridoxamine 5'-phosphate oxidase">
    <location>
        <begin position="1"/>
        <end position="210"/>
    </location>
</feature>
<feature type="binding site" evidence="1">
    <location>
        <begin position="7"/>
        <end position="10"/>
    </location>
    <ligand>
        <name>substrate</name>
    </ligand>
</feature>
<feature type="binding site" evidence="1">
    <location>
        <begin position="60"/>
        <end position="65"/>
    </location>
    <ligand>
        <name>FMN</name>
        <dbReference type="ChEBI" id="CHEBI:58210"/>
    </ligand>
</feature>
<feature type="binding site" evidence="1">
    <location>
        <position position="65"/>
    </location>
    <ligand>
        <name>substrate</name>
    </ligand>
</feature>
<feature type="binding site" evidence="1">
    <location>
        <begin position="75"/>
        <end position="76"/>
    </location>
    <ligand>
        <name>FMN</name>
        <dbReference type="ChEBI" id="CHEBI:58210"/>
    </ligand>
</feature>
<feature type="binding site" evidence="1">
    <location>
        <position position="81"/>
    </location>
    <ligand>
        <name>FMN</name>
        <dbReference type="ChEBI" id="CHEBI:58210"/>
    </ligand>
</feature>
<feature type="binding site" evidence="1">
    <location>
        <position position="82"/>
    </location>
    <ligand>
        <name>FMN</name>
        <dbReference type="ChEBI" id="CHEBI:58210"/>
    </ligand>
</feature>
<feature type="binding site" evidence="1">
    <location>
        <position position="104"/>
    </location>
    <ligand>
        <name>FMN</name>
        <dbReference type="ChEBI" id="CHEBI:58210"/>
    </ligand>
</feature>
<feature type="binding site" evidence="1">
    <location>
        <position position="122"/>
    </location>
    <ligand>
        <name>substrate</name>
    </ligand>
</feature>
<feature type="binding site" evidence="1">
    <location>
        <position position="126"/>
    </location>
    <ligand>
        <name>substrate</name>
    </ligand>
</feature>
<feature type="binding site" evidence="1">
    <location>
        <position position="130"/>
    </location>
    <ligand>
        <name>substrate</name>
    </ligand>
</feature>
<feature type="binding site" evidence="1">
    <location>
        <begin position="139"/>
        <end position="140"/>
    </location>
    <ligand>
        <name>FMN</name>
        <dbReference type="ChEBI" id="CHEBI:58210"/>
    </ligand>
</feature>
<feature type="binding site" evidence="1">
    <location>
        <position position="183"/>
    </location>
    <ligand>
        <name>FMN</name>
        <dbReference type="ChEBI" id="CHEBI:58210"/>
    </ligand>
</feature>
<feature type="binding site" evidence="1">
    <location>
        <begin position="189"/>
        <end position="191"/>
    </location>
    <ligand>
        <name>substrate</name>
    </ligand>
</feature>
<feature type="binding site" evidence="1">
    <location>
        <position position="193"/>
    </location>
    <ligand>
        <name>FMN</name>
        <dbReference type="ChEBI" id="CHEBI:58210"/>
    </ligand>
</feature>
<proteinExistence type="inferred from homology"/>
<reference key="1">
    <citation type="journal article" date="2000" name="Science">
        <title>Complete genome sequence of Neisseria meningitidis serogroup B strain MC58.</title>
        <authorList>
            <person name="Tettelin H."/>
            <person name="Saunders N.J."/>
            <person name="Heidelberg J.F."/>
            <person name="Jeffries A.C."/>
            <person name="Nelson K.E."/>
            <person name="Eisen J.A."/>
            <person name="Ketchum K.A."/>
            <person name="Hood D.W."/>
            <person name="Peden J.F."/>
            <person name="Dodson R.J."/>
            <person name="Nelson W.C."/>
            <person name="Gwinn M.L."/>
            <person name="DeBoy R.T."/>
            <person name="Peterson J.D."/>
            <person name="Hickey E.K."/>
            <person name="Haft D.H."/>
            <person name="Salzberg S.L."/>
            <person name="White O."/>
            <person name="Fleischmann R.D."/>
            <person name="Dougherty B.A."/>
            <person name="Mason T.M."/>
            <person name="Ciecko A."/>
            <person name="Parksey D.S."/>
            <person name="Blair E."/>
            <person name="Cittone H."/>
            <person name="Clark E.B."/>
            <person name="Cotton M.D."/>
            <person name="Utterback T.R."/>
            <person name="Khouri H.M."/>
            <person name="Qin H."/>
            <person name="Vamathevan J.J."/>
            <person name="Gill J."/>
            <person name="Scarlato V."/>
            <person name="Masignani V."/>
            <person name="Pizza M."/>
            <person name="Grandi G."/>
            <person name="Sun L."/>
            <person name="Smith H.O."/>
            <person name="Fraser C.M."/>
            <person name="Moxon E.R."/>
            <person name="Rappuoli R."/>
            <person name="Venter J.C."/>
        </authorList>
    </citation>
    <scope>NUCLEOTIDE SEQUENCE [LARGE SCALE GENOMIC DNA]</scope>
    <source>
        <strain>ATCC BAA-335 / MC58</strain>
    </source>
</reference>
<dbReference type="EC" id="1.4.3.5" evidence="1"/>
<dbReference type="EMBL" id="AE002098">
    <property type="protein sequence ID" value="AAF41734.1"/>
    <property type="molecule type" value="Genomic_DNA"/>
</dbReference>
<dbReference type="PIR" id="A81092">
    <property type="entry name" value="A81092"/>
</dbReference>
<dbReference type="RefSeq" id="NP_274378.1">
    <property type="nucleotide sequence ID" value="NC_003112.2"/>
</dbReference>
<dbReference type="RefSeq" id="WP_002222336.1">
    <property type="nucleotide sequence ID" value="NC_003112.2"/>
</dbReference>
<dbReference type="SMR" id="Q9JYZ5"/>
<dbReference type="FunCoup" id="Q9JYZ5">
    <property type="interactions" value="424"/>
</dbReference>
<dbReference type="STRING" id="122586.NMB1360"/>
<dbReference type="PaxDb" id="122586-NMB1360"/>
<dbReference type="KEGG" id="nme:NMB1360"/>
<dbReference type="PATRIC" id="fig|122586.8.peg.1702"/>
<dbReference type="HOGENOM" id="CLU_032263_2_2_4"/>
<dbReference type="InParanoid" id="Q9JYZ5"/>
<dbReference type="OrthoDB" id="9780392at2"/>
<dbReference type="UniPathway" id="UPA01068">
    <property type="reaction ID" value="UER00304"/>
</dbReference>
<dbReference type="UniPathway" id="UPA01068">
    <property type="reaction ID" value="UER00305"/>
</dbReference>
<dbReference type="Proteomes" id="UP000000425">
    <property type="component" value="Chromosome"/>
</dbReference>
<dbReference type="GO" id="GO:0010181">
    <property type="term" value="F:FMN binding"/>
    <property type="evidence" value="ECO:0007669"/>
    <property type="project" value="UniProtKB-UniRule"/>
</dbReference>
<dbReference type="GO" id="GO:0004733">
    <property type="term" value="F:pyridoxamine phosphate oxidase activity"/>
    <property type="evidence" value="ECO:0000318"/>
    <property type="project" value="GO_Central"/>
</dbReference>
<dbReference type="GO" id="GO:0042823">
    <property type="term" value="P:pyridoxal phosphate biosynthetic process"/>
    <property type="evidence" value="ECO:0000318"/>
    <property type="project" value="GO_Central"/>
</dbReference>
<dbReference type="GO" id="GO:0008615">
    <property type="term" value="P:pyridoxine biosynthetic process"/>
    <property type="evidence" value="ECO:0007669"/>
    <property type="project" value="UniProtKB-KW"/>
</dbReference>
<dbReference type="FunFam" id="2.30.110.10:FF:000014">
    <property type="entry name" value="Pyridoxine/pyridoxamine 5'-phosphate oxidase"/>
    <property type="match status" value="1"/>
</dbReference>
<dbReference type="Gene3D" id="2.30.110.10">
    <property type="entry name" value="Electron Transport, Fmn-binding Protein, Chain A"/>
    <property type="match status" value="1"/>
</dbReference>
<dbReference type="HAMAP" id="MF_01629">
    <property type="entry name" value="PdxH"/>
    <property type="match status" value="1"/>
</dbReference>
<dbReference type="InterPro" id="IPR000659">
    <property type="entry name" value="Pyridox_Oxase"/>
</dbReference>
<dbReference type="InterPro" id="IPR019740">
    <property type="entry name" value="Pyridox_Oxase_CS"/>
</dbReference>
<dbReference type="InterPro" id="IPR011576">
    <property type="entry name" value="Pyridox_Oxase_N"/>
</dbReference>
<dbReference type="InterPro" id="IPR019576">
    <property type="entry name" value="Pyridoxamine_oxidase_dimer_C"/>
</dbReference>
<dbReference type="InterPro" id="IPR012349">
    <property type="entry name" value="Split_barrel_FMN-bd"/>
</dbReference>
<dbReference type="NCBIfam" id="TIGR00558">
    <property type="entry name" value="pdxH"/>
    <property type="match status" value="1"/>
</dbReference>
<dbReference type="NCBIfam" id="NF004231">
    <property type="entry name" value="PRK05679.1"/>
    <property type="match status" value="1"/>
</dbReference>
<dbReference type="PANTHER" id="PTHR10851:SF0">
    <property type="entry name" value="PYRIDOXINE-5'-PHOSPHATE OXIDASE"/>
    <property type="match status" value="1"/>
</dbReference>
<dbReference type="PANTHER" id="PTHR10851">
    <property type="entry name" value="PYRIDOXINE-5-PHOSPHATE OXIDASE"/>
    <property type="match status" value="1"/>
</dbReference>
<dbReference type="Pfam" id="PF10590">
    <property type="entry name" value="PNP_phzG_C"/>
    <property type="match status" value="1"/>
</dbReference>
<dbReference type="Pfam" id="PF01243">
    <property type="entry name" value="PNPOx_N"/>
    <property type="match status" value="1"/>
</dbReference>
<dbReference type="PIRSF" id="PIRSF000190">
    <property type="entry name" value="Pyd_amn-ph_oxd"/>
    <property type="match status" value="1"/>
</dbReference>
<dbReference type="SUPFAM" id="SSF50475">
    <property type="entry name" value="FMN-binding split barrel"/>
    <property type="match status" value="1"/>
</dbReference>
<dbReference type="PROSITE" id="PS01064">
    <property type="entry name" value="PYRIDOX_OXIDASE"/>
    <property type="match status" value="1"/>
</dbReference>
<keyword id="KW-0285">Flavoprotein</keyword>
<keyword id="KW-0288">FMN</keyword>
<keyword id="KW-0560">Oxidoreductase</keyword>
<keyword id="KW-0664">Pyridoxine biosynthesis</keyword>
<keyword id="KW-1185">Reference proteome</keyword>
<name>PDXH_NEIMB</name>
<organism>
    <name type="scientific">Neisseria meningitidis serogroup B (strain ATCC BAA-335 / MC58)</name>
    <dbReference type="NCBI Taxonomy" id="122586"/>
    <lineage>
        <taxon>Bacteria</taxon>
        <taxon>Pseudomonadati</taxon>
        <taxon>Pseudomonadota</taxon>
        <taxon>Betaproteobacteria</taxon>
        <taxon>Neisseriales</taxon>
        <taxon>Neisseriaceae</taxon>
        <taxon>Neisseria</taxon>
    </lineage>
</organism>
<comment type="function">
    <text evidence="1">Catalyzes the oxidation of either pyridoxine 5'-phosphate (PNP) or pyridoxamine 5'-phosphate (PMP) into pyridoxal 5'-phosphate (PLP).</text>
</comment>
<comment type="catalytic activity">
    <reaction evidence="1">
        <text>pyridoxamine 5'-phosphate + O2 + H2O = pyridoxal 5'-phosphate + H2O2 + NH4(+)</text>
        <dbReference type="Rhea" id="RHEA:15817"/>
        <dbReference type="ChEBI" id="CHEBI:15377"/>
        <dbReference type="ChEBI" id="CHEBI:15379"/>
        <dbReference type="ChEBI" id="CHEBI:16240"/>
        <dbReference type="ChEBI" id="CHEBI:28938"/>
        <dbReference type="ChEBI" id="CHEBI:58451"/>
        <dbReference type="ChEBI" id="CHEBI:597326"/>
        <dbReference type="EC" id="1.4.3.5"/>
    </reaction>
</comment>
<comment type="catalytic activity">
    <reaction evidence="1">
        <text>pyridoxine 5'-phosphate + O2 = pyridoxal 5'-phosphate + H2O2</text>
        <dbReference type="Rhea" id="RHEA:15149"/>
        <dbReference type="ChEBI" id="CHEBI:15379"/>
        <dbReference type="ChEBI" id="CHEBI:16240"/>
        <dbReference type="ChEBI" id="CHEBI:58589"/>
        <dbReference type="ChEBI" id="CHEBI:597326"/>
        <dbReference type="EC" id="1.4.3.5"/>
    </reaction>
</comment>
<comment type="cofactor">
    <cofactor evidence="1">
        <name>FMN</name>
        <dbReference type="ChEBI" id="CHEBI:58210"/>
    </cofactor>
    <text evidence="1">Binds 1 FMN per subunit.</text>
</comment>
<comment type="pathway">
    <text evidence="1">Cofactor metabolism; pyridoxal 5'-phosphate salvage; pyridoxal 5'-phosphate from pyridoxamine 5'-phosphate: step 1/1.</text>
</comment>
<comment type="pathway">
    <text evidence="1">Cofactor metabolism; pyridoxal 5'-phosphate salvage; pyridoxal 5'-phosphate from pyridoxine 5'-phosphate: step 1/1.</text>
</comment>
<comment type="subunit">
    <text evidence="1">Homodimer.</text>
</comment>
<comment type="similarity">
    <text evidence="1">Belongs to the pyridoxamine 5'-phosphate oxidase family.</text>
</comment>
<evidence type="ECO:0000255" key="1">
    <source>
        <dbReference type="HAMAP-Rule" id="MF_01629"/>
    </source>
</evidence>
<protein>
    <recommendedName>
        <fullName evidence="1">Pyridoxine/pyridoxamine 5'-phosphate oxidase</fullName>
        <ecNumber evidence="1">1.4.3.5</ecNumber>
    </recommendedName>
    <alternativeName>
        <fullName evidence="1">PNP/PMP oxidase</fullName>
        <shortName evidence="1">PNPOx</shortName>
    </alternativeName>
    <alternativeName>
        <fullName evidence="1">Pyridoxal 5'-phosphate synthase</fullName>
    </alternativeName>
</protein>